<gene>
    <name type="primary">CAM2</name>
</gene>
<organism>
    <name type="scientific">Branchiostoma lanceolatum</name>
    <name type="common">Common lancelet</name>
    <name type="synonym">Amphioxus lanceolatum</name>
    <dbReference type="NCBI Taxonomy" id="7740"/>
    <lineage>
        <taxon>Eukaryota</taxon>
        <taxon>Metazoa</taxon>
        <taxon>Chordata</taxon>
        <taxon>Cephalochordata</taxon>
        <taxon>Leptocardii</taxon>
        <taxon>Amphioxiformes</taxon>
        <taxon>Branchiostomatidae</taxon>
        <taxon>Branchiostoma</taxon>
    </lineage>
</organism>
<proteinExistence type="evidence at transcript level"/>
<name>CALM2_BRALA</name>
<feature type="initiator methionine" description="Removed" evidence="1">
    <location>
        <position position="1"/>
    </location>
</feature>
<feature type="chain" id="PRO_0000198249" description="Calmodulin-2">
    <location>
        <begin position="2"/>
        <end position="149"/>
    </location>
</feature>
<feature type="domain" description="EF-hand 1" evidence="2">
    <location>
        <begin position="8"/>
        <end position="43"/>
    </location>
</feature>
<feature type="domain" description="EF-hand 2" evidence="2">
    <location>
        <begin position="44"/>
        <end position="79"/>
    </location>
</feature>
<feature type="domain" description="EF-hand 3" evidence="2">
    <location>
        <begin position="81"/>
        <end position="116"/>
    </location>
</feature>
<feature type="domain" description="EF-hand 4" evidence="2">
    <location>
        <begin position="117"/>
        <end position="149"/>
    </location>
</feature>
<feature type="binding site" evidence="2">
    <location>
        <position position="21"/>
    </location>
    <ligand>
        <name>Ca(2+)</name>
        <dbReference type="ChEBI" id="CHEBI:29108"/>
        <label>1</label>
    </ligand>
</feature>
<feature type="binding site" evidence="2">
    <location>
        <position position="23"/>
    </location>
    <ligand>
        <name>Ca(2+)</name>
        <dbReference type="ChEBI" id="CHEBI:29108"/>
        <label>1</label>
    </ligand>
</feature>
<feature type="binding site" evidence="2">
    <location>
        <position position="25"/>
    </location>
    <ligand>
        <name>Ca(2+)</name>
        <dbReference type="ChEBI" id="CHEBI:29108"/>
        <label>1</label>
    </ligand>
</feature>
<feature type="binding site" evidence="2">
    <location>
        <position position="27"/>
    </location>
    <ligand>
        <name>Ca(2+)</name>
        <dbReference type="ChEBI" id="CHEBI:29108"/>
        <label>1</label>
    </ligand>
</feature>
<feature type="binding site" evidence="2">
    <location>
        <position position="32"/>
    </location>
    <ligand>
        <name>Ca(2+)</name>
        <dbReference type="ChEBI" id="CHEBI:29108"/>
        <label>1</label>
    </ligand>
</feature>
<feature type="binding site" evidence="2">
    <location>
        <position position="57"/>
    </location>
    <ligand>
        <name>Ca(2+)</name>
        <dbReference type="ChEBI" id="CHEBI:29108"/>
        <label>2</label>
    </ligand>
</feature>
<feature type="binding site" evidence="2">
    <location>
        <position position="59"/>
    </location>
    <ligand>
        <name>Ca(2+)</name>
        <dbReference type="ChEBI" id="CHEBI:29108"/>
        <label>2</label>
    </ligand>
</feature>
<feature type="binding site" evidence="2">
    <location>
        <position position="61"/>
    </location>
    <ligand>
        <name>Ca(2+)</name>
        <dbReference type="ChEBI" id="CHEBI:29108"/>
        <label>2</label>
    </ligand>
</feature>
<feature type="binding site" evidence="2">
    <location>
        <position position="63"/>
    </location>
    <ligand>
        <name>Ca(2+)</name>
        <dbReference type="ChEBI" id="CHEBI:29108"/>
        <label>2</label>
    </ligand>
</feature>
<feature type="binding site" evidence="2">
    <location>
        <position position="68"/>
    </location>
    <ligand>
        <name>Ca(2+)</name>
        <dbReference type="ChEBI" id="CHEBI:29108"/>
        <label>2</label>
    </ligand>
</feature>
<feature type="binding site" evidence="2">
    <location>
        <position position="94"/>
    </location>
    <ligand>
        <name>Ca(2+)</name>
        <dbReference type="ChEBI" id="CHEBI:29108"/>
        <label>3</label>
    </ligand>
</feature>
<feature type="binding site" evidence="2">
    <location>
        <position position="96"/>
    </location>
    <ligand>
        <name>Ca(2+)</name>
        <dbReference type="ChEBI" id="CHEBI:29108"/>
        <label>3</label>
    </ligand>
</feature>
<feature type="binding site" evidence="2">
    <location>
        <position position="98"/>
    </location>
    <ligand>
        <name>Ca(2+)</name>
        <dbReference type="ChEBI" id="CHEBI:29108"/>
        <label>3</label>
    </ligand>
</feature>
<feature type="binding site" evidence="2">
    <location>
        <position position="105"/>
    </location>
    <ligand>
        <name>Ca(2+)</name>
        <dbReference type="ChEBI" id="CHEBI:29108"/>
        <label>3</label>
    </ligand>
</feature>
<feature type="binding site" evidence="2">
    <location>
        <position position="130"/>
    </location>
    <ligand>
        <name>Ca(2+)</name>
        <dbReference type="ChEBI" id="CHEBI:29108"/>
        <label>4</label>
    </ligand>
</feature>
<feature type="binding site" evidence="2">
    <location>
        <position position="132"/>
    </location>
    <ligand>
        <name>Ca(2+)</name>
        <dbReference type="ChEBI" id="CHEBI:29108"/>
        <label>4</label>
    </ligand>
</feature>
<feature type="binding site" evidence="2">
    <location>
        <position position="134"/>
    </location>
    <ligand>
        <name>Ca(2+)</name>
        <dbReference type="ChEBI" id="CHEBI:29108"/>
        <label>4</label>
    </ligand>
</feature>
<feature type="binding site" evidence="2">
    <location>
        <position position="136"/>
    </location>
    <ligand>
        <name>Ca(2+)</name>
        <dbReference type="ChEBI" id="CHEBI:29108"/>
        <label>4</label>
    </ligand>
</feature>
<feature type="binding site" evidence="2">
    <location>
        <position position="141"/>
    </location>
    <ligand>
        <name>Ca(2+)</name>
        <dbReference type="ChEBI" id="CHEBI:29108"/>
        <label>4</label>
    </ligand>
</feature>
<feature type="modified residue" description="N-acetylalanine" evidence="1">
    <location>
        <position position="2"/>
    </location>
</feature>
<feature type="modified residue" description="N6,N6,N6-trimethyllysine" evidence="1">
    <location>
        <position position="116"/>
    </location>
</feature>
<comment type="function">
    <text>Calmodulin mediates the control of a large number of enzymes, ion channels and other proteins by Ca(2+). Among the enzymes to be stimulated by the calmodulin-Ca(2+) complex are a number of protein kinases and phosphatases.</text>
</comment>
<comment type="miscellaneous">
    <text>This protein has four functional calcium-binding sites.</text>
</comment>
<comment type="similarity">
    <text evidence="3">Belongs to the calmodulin family.</text>
</comment>
<sequence length="149" mass="16825">MADQLTEEQIAEFKEAFSLFDKDGDGTITTKELGTVMRSLGQNPTEAELQDMINEVDADGNGTIDFPEFLTMMARKMKDTDSEEEIREAFRVFDKDGNGFISAAELRHVMTNLGEKLTDEEVDEMVREADIDGDGQVNYEEFVEMMTSK</sequence>
<keyword id="KW-0007">Acetylation</keyword>
<keyword id="KW-0106">Calcium</keyword>
<keyword id="KW-0479">Metal-binding</keyword>
<keyword id="KW-0488">Methylation</keyword>
<keyword id="KW-0677">Repeat</keyword>
<evidence type="ECO:0000250" key="1"/>
<evidence type="ECO:0000255" key="2">
    <source>
        <dbReference type="PROSITE-ProRule" id="PRU00448"/>
    </source>
</evidence>
<evidence type="ECO:0000305" key="3"/>
<accession>Q9UB37</accession>
<dbReference type="EMBL" id="AJ133486">
    <property type="protein sequence ID" value="CAB38169.1"/>
    <property type="molecule type" value="mRNA"/>
</dbReference>
<dbReference type="SMR" id="Q9UB37"/>
<dbReference type="GO" id="GO:0016460">
    <property type="term" value="C:myosin II complex"/>
    <property type="evidence" value="ECO:0007669"/>
    <property type="project" value="TreeGrafter"/>
</dbReference>
<dbReference type="GO" id="GO:0005509">
    <property type="term" value="F:calcium ion binding"/>
    <property type="evidence" value="ECO:0007669"/>
    <property type="project" value="InterPro"/>
</dbReference>
<dbReference type="CDD" id="cd00051">
    <property type="entry name" value="EFh"/>
    <property type="match status" value="2"/>
</dbReference>
<dbReference type="FunFam" id="1.10.238.10:FF:000527">
    <property type="entry name" value="Calmodulin-3"/>
    <property type="match status" value="1"/>
</dbReference>
<dbReference type="Gene3D" id="1.10.238.10">
    <property type="entry name" value="EF-hand"/>
    <property type="match status" value="3"/>
</dbReference>
<dbReference type="InterPro" id="IPR050230">
    <property type="entry name" value="CALM/Myosin/TropC-like"/>
</dbReference>
<dbReference type="InterPro" id="IPR011992">
    <property type="entry name" value="EF-hand-dom_pair"/>
</dbReference>
<dbReference type="InterPro" id="IPR018247">
    <property type="entry name" value="EF_Hand_1_Ca_BS"/>
</dbReference>
<dbReference type="InterPro" id="IPR002048">
    <property type="entry name" value="EF_hand_dom"/>
</dbReference>
<dbReference type="PANTHER" id="PTHR23048:SF0">
    <property type="entry name" value="CALMODULIN LIKE 3"/>
    <property type="match status" value="1"/>
</dbReference>
<dbReference type="PANTHER" id="PTHR23048">
    <property type="entry name" value="MYOSIN LIGHT CHAIN 1, 3"/>
    <property type="match status" value="1"/>
</dbReference>
<dbReference type="Pfam" id="PF13499">
    <property type="entry name" value="EF-hand_7"/>
    <property type="match status" value="2"/>
</dbReference>
<dbReference type="SMART" id="SM00054">
    <property type="entry name" value="EFh"/>
    <property type="match status" value="4"/>
</dbReference>
<dbReference type="SUPFAM" id="SSF47473">
    <property type="entry name" value="EF-hand"/>
    <property type="match status" value="1"/>
</dbReference>
<dbReference type="PROSITE" id="PS00018">
    <property type="entry name" value="EF_HAND_1"/>
    <property type="match status" value="4"/>
</dbReference>
<dbReference type="PROSITE" id="PS50222">
    <property type="entry name" value="EF_HAND_2"/>
    <property type="match status" value="4"/>
</dbReference>
<protein>
    <recommendedName>
        <fullName>Calmodulin-2</fullName>
        <shortName>CaM 2</shortName>
    </recommendedName>
</protein>
<reference key="1">
    <citation type="journal article" date="2000" name="J. Mol. Evol.">
        <title>Molecular evolution of calmodulin and calmodulin-like genes in the cephalochordate Branchiostoma.</title>
        <authorList>
            <person name="Karabinos A."/>
            <person name="Bhattacharya D."/>
        </authorList>
    </citation>
    <scope>NUCLEOTIDE SEQUENCE [MRNA]</scope>
</reference>